<evidence type="ECO:0000269" key="1">
    <source>
    </source>
</evidence>
<evidence type="ECO:0000269" key="2">
    <source>
    </source>
</evidence>
<evidence type="ECO:0000269" key="3">
    <source>
    </source>
</evidence>
<evidence type="ECO:0000269" key="4">
    <source>
    </source>
</evidence>
<evidence type="ECO:0000305" key="5"/>
<evidence type="ECO:0007829" key="6">
    <source>
        <dbReference type="PDB" id="1JPM"/>
    </source>
</evidence>
<evidence type="ECO:0007829" key="7">
    <source>
        <dbReference type="PDB" id="1TKK"/>
    </source>
</evidence>
<comment type="function">
    <text evidence="1">Catalyzes the epimerization of L-Ala-D-Glu to L-Ala-L-Glu and has probably a role in the metabolism of the murein peptide, of which L-Ala-D-Glu is a component. Is also able to catalyze the reverse reaction and the epimerization of the other Ala-X dipeptides L-Ala-L-Asp, L-Ala-L-Leu, L-Ala-L-Met, and L-Ala-L-Ser. Is not able to epimerize other L-Ala-X dipeptides. Is also active with L-Ser-L-Glu and, oddly, L-Pro-L-Glu, but not with L-Glu-L-Glu, L-Lys-L-Glu, L-Lys-L-Ala, or D-Ala-D-Ala.</text>
</comment>
<comment type="catalytic activity">
    <reaction evidence="1">
        <text>L-alanyl-L-glutamate = L-alanyl-D-glutamate</text>
        <dbReference type="Rhea" id="RHEA:28394"/>
        <dbReference type="ChEBI" id="CHEBI:61395"/>
        <dbReference type="ChEBI" id="CHEBI:61396"/>
        <dbReference type="EC" id="5.1.1.20"/>
    </reaction>
</comment>
<comment type="cofactor">
    <cofactor evidence="2 4">
        <name>Mg(2+)</name>
        <dbReference type="ChEBI" id="CHEBI:18420"/>
    </cofactor>
    <text evidence="2 4">Binds 1 Mg(2+) ion per subunit.</text>
</comment>
<comment type="biophysicochemical properties">
    <kinetics>
        <KM evidence="1">320 uM for L-Ala-D-Glu (at pH 8.5)</KM>
        <KM evidence="1">28 uM for L-Ala-D-Asp (at pH 8.5)</KM>
        <KM evidence="1">510 uM for L-Ala-D-Met (at pH 8.5)</KM>
        <text>The catalytic efficiency is 25-fold higher with L-Ala-D-Glu than with L-Ala-D-Asp or L-Ala-D-Met as substrate.</text>
    </kinetics>
</comment>
<comment type="pathway">
    <text>Cell wall degradation; peptidoglycan degradation.</text>
</comment>
<comment type="subunit">
    <text evidence="2 4">Homooctamer; tetramer of dimers.</text>
</comment>
<comment type="induction">
    <text evidence="3">Repressed by AbrB, a transcription factor that negatively controls biofilm formation.</text>
</comment>
<comment type="similarity">
    <text evidence="5">Belongs to the mandelate racemase/muconate lactonizing enzyme family.</text>
</comment>
<accession>O34508</accession>
<accession>Q796M5</accession>
<feature type="chain" id="PRO_0000388970" description="L-Ala-D/L-Glu epimerase">
    <location>
        <begin position="1"/>
        <end position="366"/>
    </location>
</feature>
<feature type="active site" description="Proton acceptor; specific for (R)-substrate epimerization" evidence="4">
    <location>
        <position position="162"/>
    </location>
</feature>
<feature type="active site" description="Proton acceptor; specific for (S)-substrate epimerization" evidence="4">
    <location>
        <position position="268"/>
    </location>
</feature>
<feature type="binding site" evidence="4">
    <location>
        <position position="24"/>
    </location>
    <ligand>
        <name>substrate</name>
    </ligand>
</feature>
<feature type="binding site" evidence="4">
    <location>
        <position position="135"/>
    </location>
    <ligand>
        <name>substrate</name>
    </ligand>
</feature>
<feature type="binding site" evidence="4">
    <location>
        <position position="160"/>
    </location>
    <ligand>
        <name>substrate</name>
    </ligand>
</feature>
<feature type="binding site" evidence="2 4">
    <location>
        <position position="191"/>
    </location>
    <ligand>
        <name>Mg(2+)</name>
        <dbReference type="ChEBI" id="CHEBI:18420"/>
    </ligand>
</feature>
<feature type="binding site" evidence="2 4">
    <location>
        <position position="219"/>
    </location>
    <ligand>
        <name>Mg(2+)</name>
        <dbReference type="ChEBI" id="CHEBI:18420"/>
    </ligand>
</feature>
<feature type="binding site" evidence="2 4">
    <location>
        <position position="244"/>
    </location>
    <ligand>
        <name>Mg(2+)</name>
        <dbReference type="ChEBI" id="CHEBI:18420"/>
    </ligand>
</feature>
<feature type="binding site" evidence="4">
    <location>
        <position position="296"/>
    </location>
    <ligand>
        <name>substrate</name>
    </ligand>
</feature>
<feature type="binding site" evidence="4">
    <location>
        <position position="298"/>
    </location>
    <ligand>
        <name>substrate</name>
    </ligand>
</feature>
<feature type="binding site" evidence="4">
    <location>
        <position position="321"/>
    </location>
    <ligand>
        <name>substrate</name>
    </ligand>
</feature>
<feature type="binding site" evidence="4">
    <location>
        <position position="323"/>
    </location>
    <ligand>
        <name>substrate</name>
    </ligand>
</feature>
<feature type="strand" evidence="7">
    <location>
        <begin position="2"/>
        <end position="20"/>
    </location>
</feature>
<feature type="strand" evidence="7">
    <location>
        <begin position="25"/>
        <end position="38"/>
    </location>
</feature>
<feature type="strand" evidence="7">
    <location>
        <begin position="43"/>
        <end position="48"/>
    </location>
</feature>
<feature type="turn" evidence="7">
    <location>
        <begin position="52"/>
        <end position="55"/>
    </location>
</feature>
<feature type="helix" evidence="7">
    <location>
        <begin position="59"/>
        <end position="68"/>
    </location>
</feature>
<feature type="helix" evidence="7">
    <location>
        <begin position="70"/>
        <end position="74"/>
    </location>
</feature>
<feature type="helix" evidence="7">
    <location>
        <begin position="79"/>
        <end position="81"/>
    </location>
</feature>
<feature type="helix" evidence="7">
    <location>
        <begin position="82"/>
        <end position="91"/>
    </location>
</feature>
<feature type="strand" evidence="7">
    <location>
        <begin position="92"/>
        <end position="95"/>
    </location>
</feature>
<feature type="helix" evidence="7">
    <location>
        <begin position="97"/>
        <end position="114"/>
    </location>
</feature>
<feature type="helix" evidence="7">
    <location>
        <begin position="119"/>
        <end position="123"/>
    </location>
</feature>
<feature type="strand" evidence="7">
    <location>
        <begin position="128"/>
        <end position="132"/>
    </location>
</feature>
<feature type="strand" evidence="7">
    <location>
        <begin position="134"/>
        <end position="136"/>
    </location>
</feature>
<feature type="helix" evidence="7">
    <location>
        <begin position="141"/>
        <end position="154"/>
    </location>
</feature>
<feature type="strand" evidence="7">
    <location>
        <begin position="158"/>
        <end position="162"/>
    </location>
</feature>
<feature type="strand" evidence="6">
    <location>
        <begin position="164"/>
        <end position="166"/>
    </location>
</feature>
<feature type="helix" evidence="7">
    <location>
        <begin position="168"/>
        <end position="182"/>
    </location>
</feature>
<feature type="strand" evidence="7">
    <location>
        <begin position="184"/>
        <end position="191"/>
    </location>
</feature>
<feature type="helix" evidence="7">
    <location>
        <begin position="198"/>
        <end position="210"/>
    </location>
</feature>
<feature type="strand" evidence="7">
    <location>
        <begin position="215"/>
        <end position="219"/>
    </location>
</feature>
<feature type="helix" evidence="7">
    <location>
        <begin position="227"/>
        <end position="236"/>
    </location>
</feature>
<feature type="strand" evidence="7">
    <location>
        <begin position="241"/>
        <end position="243"/>
    </location>
</feature>
<feature type="helix" evidence="7">
    <location>
        <begin position="250"/>
        <end position="259"/>
    </location>
</feature>
<feature type="strand" evidence="7">
    <location>
        <begin position="263"/>
        <end position="267"/>
    </location>
</feature>
<feature type="helix" evidence="7">
    <location>
        <begin position="269"/>
        <end position="272"/>
    </location>
</feature>
<feature type="helix" evidence="7">
    <location>
        <begin position="275"/>
        <end position="287"/>
    </location>
</feature>
<feature type="strand" evidence="7">
    <location>
        <begin position="291"/>
        <end position="294"/>
    </location>
</feature>
<feature type="helix" evidence="7">
    <location>
        <begin position="301"/>
        <end position="313"/>
    </location>
</feature>
<feature type="strand" evidence="7">
    <location>
        <begin position="317"/>
        <end position="320"/>
    </location>
</feature>
<feature type="helix" evidence="7">
    <location>
        <begin position="324"/>
        <end position="327"/>
    </location>
</feature>
<feature type="strand" evidence="7">
    <location>
        <begin position="328"/>
        <end position="330"/>
    </location>
</feature>
<feature type="strand" evidence="7">
    <location>
        <begin position="333"/>
        <end position="336"/>
    </location>
</feature>
<feature type="strand" evidence="7">
    <location>
        <begin position="338"/>
        <end position="340"/>
    </location>
</feature>
<feature type="strand" evidence="7">
    <location>
        <begin position="343"/>
        <end position="345"/>
    </location>
</feature>
<feature type="strand" evidence="7">
    <location>
        <begin position="349"/>
        <end position="351"/>
    </location>
</feature>
<feature type="strand" evidence="7">
    <location>
        <begin position="354"/>
        <end position="357"/>
    </location>
</feature>
<sequence length="366" mass="39473">MKIIRIETSRIAVPLTKPFKTALRTVYTAESVIVRITYDSGAVGWGEAPPTLVITGDSMDSIESAIHHVLKPALLGKSLAGYEAILHDIQHLLTGNMSAKAAVEMALYDGWAQMCGLPLYQMLGGYRDTLETDYTVSVNSPEEMAADAENYLKQGFQTLKIKVGKDDIATDIARIQEIRKRVGSAVKLRLDANQGWRPKEAVTAIRKMEDAGLGIELVEQPVHKDDLAGLKKVTDATDTPIMADESVFTPRQAFEVLQTRSADLINIKLMKAGGISGAEKINAMAEACGVECMVGSMIETKLGITAAAHFAASKRNITRFDFDAPLMLKTDVFNGGITYSGSTISMPGKPGLGIIGAALLKGEKEQ</sequence>
<name>AEEP_BACSU</name>
<gene>
    <name type="primary">ykfB</name>
    <name type="ordered locus">BSU12980</name>
</gene>
<protein>
    <recommendedName>
        <fullName>L-Ala-D/L-Glu epimerase</fullName>
        <shortName>AE epimerase</shortName>
        <shortName>AEE</shortName>
        <ecNumber evidence="1">5.1.1.20</ecNumber>
    </recommendedName>
</protein>
<dbReference type="EC" id="5.1.1.20" evidence="1"/>
<dbReference type="EMBL" id="AJ002571">
    <property type="protein sequence ID" value="CAA05578.1"/>
    <property type="molecule type" value="Genomic_DNA"/>
</dbReference>
<dbReference type="EMBL" id="AL009126">
    <property type="protein sequence ID" value="CAB13155.1"/>
    <property type="molecule type" value="Genomic_DNA"/>
</dbReference>
<dbReference type="PIR" id="H69855">
    <property type="entry name" value="H69855"/>
</dbReference>
<dbReference type="RefSeq" id="WP_003244980.1">
    <property type="nucleotide sequence ID" value="NZ_OZ025638.1"/>
</dbReference>
<dbReference type="PDB" id="1JPM">
    <property type="method" value="X-ray"/>
    <property type="resolution" value="2.25 A"/>
    <property type="chains" value="A/B/C/D=1-366"/>
</dbReference>
<dbReference type="PDB" id="1TKK">
    <property type="method" value="X-ray"/>
    <property type="resolution" value="2.10 A"/>
    <property type="chains" value="A/B/C/D/E/F/G/H=1-366"/>
</dbReference>
<dbReference type="PDBsum" id="1JPM"/>
<dbReference type="PDBsum" id="1TKK"/>
<dbReference type="SMR" id="O34508"/>
<dbReference type="FunCoup" id="O34508">
    <property type="interactions" value="233"/>
</dbReference>
<dbReference type="STRING" id="224308.BSU12980"/>
<dbReference type="PaxDb" id="224308-BSU12980"/>
<dbReference type="EnsemblBacteria" id="CAB13155">
    <property type="protein sequence ID" value="CAB13155"/>
    <property type="gene ID" value="BSU_12980"/>
</dbReference>
<dbReference type="GeneID" id="939862"/>
<dbReference type="KEGG" id="bsu:BSU12980"/>
<dbReference type="PATRIC" id="fig|224308.179.peg.1410"/>
<dbReference type="eggNOG" id="COG4948">
    <property type="taxonomic scope" value="Bacteria"/>
</dbReference>
<dbReference type="InParanoid" id="O34508"/>
<dbReference type="OrthoDB" id="9775391at2"/>
<dbReference type="PhylomeDB" id="O34508"/>
<dbReference type="BioCyc" id="BSUB:BSU12980-MONOMER"/>
<dbReference type="BRENDA" id="5.1.1.20">
    <property type="organism ID" value="658"/>
</dbReference>
<dbReference type="SABIO-RK" id="O34508"/>
<dbReference type="UniPathway" id="UPA00549"/>
<dbReference type="EvolutionaryTrace" id="O34508"/>
<dbReference type="Proteomes" id="UP000001570">
    <property type="component" value="Chromosome"/>
</dbReference>
<dbReference type="GO" id="GO:0103031">
    <property type="term" value="F:L-Ala-D/L-Glu epimerase activity"/>
    <property type="evidence" value="ECO:0007669"/>
    <property type="project" value="UniProtKB-EC"/>
</dbReference>
<dbReference type="GO" id="GO:0046872">
    <property type="term" value="F:metal ion binding"/>
    <property type="evidence" value="ECO:0007669"/>
    <property type="project" value="UniProtKB-KW"/>
</dbReference>
<dbReference type="GO" id="GO:0016854">
    <property type="term" value="F:racemase and epimerase activity"/>
    <property type="evidence" value="ECO:0000318"/>
    <property type="project" value="GO_Central"/>
</dbReference>
<dbReference type="GO" id="GO:0016998">
    <property type="term" value="P:cell wall macromolecule catabolic process"/>
    <property type="evidence" value="ECO:0007669"/>
    <property type="project" value="UniProtKB-UniPathway"/>
</dbReference>
<dbReference type="GO" id="GO:0071555">
    <property type="term" value="P:cell wall organization"/>
    <property type="evidence" value="ECO:0007669"/>
    <property type="project" value="UniProtKB-KW"/>
</dbReference>
<dbReference type="GO" id="GO:0006518">
    <property type="term" value="P:peptide metabolic process"/>
    <property type="evidence" value="ECO:0000318"/>
    <property type="project" value="GO_Central"/>
</dbReference>
<dbReference type="CDD" id="cd03319">
    <property type="entry name" value="L-Ala-DL-Glu_epimerase"/>
    <property type="match status" value="1"/>
</dbReference>
<dbReference type="FunFam" id="3.30.390.10:FF:000009">
    <property type="entry name" value="Hydrophobic dipeptide epimerase"/>
    <property type="match status" value="1"/>
</dbReference>
<dbReference type="Gene3D" id="3.20.20.120">
    <property type="entry name" value="Enolase-like C-terminal domain"/>
    <property type="match status" value="1"/>
</dbReference>
<dbReference type="Gene3D" id="3.30.390.10">
    <property type="entry name" value="Enolase-like, N-terminal domain"/>
    <property type="match status" value="1"/>
</dbReference>
<dbReference type="InterPro" id="IPR034603">
    <property type="entry name" value="Dipeptide_epimerase"/>
</dbReference>
<dbReference type="InterPro" id="IPR036849">
    <property type="entry name" value="Enolase-like_C_sf"/>
</dbReference>
<dbReference type="InterPro" id="IPR029017">
    <property type="entry name" value="Enolase-like_N"/>
</dbReference>
<dbReference type="InterPro" id="IPR029065">
    <property type="entry name" value="Enolase_C-like"/>
</dbReference>
<dbReference type="InterPro" id="IPR013342">
    <property type="entry name" value="Mandelate_racemase_C"/>
</dbReference>
<dbReference type="InterPro" id="IPR013341">
    <property type="entry name" value="Mandelate_racemase_N_dom"/>
</dbReference>
<dbReference type="PANTHER" id="PTHR48073:SF2">
    <property type="entry name" value="O-SUCCINYLBENZOATE SYNTHASE"/>
    <property type="match status" value="1"/>
</dbReference>
<dbReference type="PANTHER" id="PTHR48073">
    <property type="entry name" value="O-SUCCINYLBENZOATE SYNTHASE-RELATED"/>
    <property type="match status" value="1"/>
</dbReference>
<dbReference type="Pfam" id="PF13378">
    <property type="entry name" value="MR_MLE_C"/>
    <property type="match status" value="1"/>
</dbReference>
<dbReference type="Pfam" id="PF02746">
    <property type="entry name" value="MR_MLE_N"/>
    <property type="match status" value="1"/>
</dbReference>
<dbReference type="SFLD" id="SFLDF00010">
    <property type="entry name" value="dipeptide_epimerase"/>
    <property type="match status" value="1"/>
</dbReference>
<dbReference type="SFLD" id="SFLDS00001">
    <property type="entry name" value="Enolase"/>
    <property type="match status" value="2"/>
</dbReference>
<dbReference type="SFLD" id="SFLDF00009">
    <property type="entry name" value="o-succinylbenzoate_synthase"/>
    <property type="match status" value="1"/>
</dbReference>
<dbReference type="SMART" id="SM00922">
    <property type="entry name" value="MR_MLE"/>
    <property type="match status" value="1"/>
</dbReference>
<dbReference type="SUPFAM" id="SSF51604">
    <property type="entry name" value="Enolase C-terminal domain-like"/>
    <property type="match status" value="1"/>
</dbReference>
<dbReference type="SUPFAM" id="SSF54826">
    <property type="entry name" value="Enolase N-terminal domain-like"/>
    <property type="match status" value="1"/>
</dbReference>
<reference key="1">
    <citation type="submission" date="1997-11" db="EMBL/GenBank/DDBJ databases">
        <title>Sequence of the Bacillus subtilis genome between xlyA and ykoR.</title>
        <authorList>
            <person name="Devine K.M."/>
        </authorList>
    </citation>
    <scope>NUCLEOTIDE SEQUENCE [GENOMIC DNA]</scope>
    <source>
        <strain>168</strain>
    </source>
</reference>
<reference key="2">
    <citation type="journal article" date="1997" name="Nature">
        <title>The complete genome sequence of the Gram-positive bacterium Bacillus subtilis.</title>
        <authorList>
            <person name="Kunst F."/>
            <person name="Ogasawara N."/>
            <person name="Moszer I."/>
            <person name="Albertini A.M."/>
            <person name="Alloni G."/>
            <person name="Azevedo V."/>
            <person name="Bertero M.G."/>
            <person name="Bessieres P."/>
            <person name="Bolotin A."/>
            <person name="Borchert S."/>
            <person name="Borriss R."/>
            <person name="Boursier L."/>
            <person name="Brans A."/>
            <person name="Braun M."/>
            <person name="Brignell S.C."/>
            <person name="Bron S."/>
            <person name="Brouillet S."/>
            <person name="Bruschi C.V."/>
            <person name="Caldwell B."/>
            <person name="Capuano V."/>
            <person name="Carter N.M."/>
            <person name="Choi S.-K."/>
            <person name="Codani J.-J."/>
            <person name="Connerton I.F."/>
            <person name="Cummings N.J."/>
            <person name="Daniel R.A."/>
            <person name="Denizot F."/>
            <person name="Devine K.M."/>
            <person name="Duesterhoeft A."/>
            <person name="Ehrlich S.D."/>
            <person name="Emmerson P.T."/>
            <person name="Entian K.-D."/>
            <person name="Errington J."/>
            <person name="Fabret C."/>
            <person name="Ferrari E."/>
            <person name="Foulger D."/>
            <person name="Fritz C."/>
            <person name="Fujita M."/>
            <person name="Fujita Y."/>
            <person name="Fuma S."/>
            <person name="Galizzi A."/>
            <person name="Galleron N."/>
            <person name="Ghim S.-Y."/>
            <person name="Glaser P."/>
            <person name="Goffeau A."/>
            <person name="Golightly E.J."/>
            <person name="Grandi G."/>
            <person name="Guiseppi G."/>
            <person name="Guy B.J."/>
            <person name="Haga K."/>
            <person name="Haiech J."/>
            <person name="Harwood C.R."/>
            <person name="Henaut A."/>
            <person name="Hilbert H."/>
            <person name="Holsappel S."/>
            <person name="Hosono S."/>
            <person name="Hullo M.-F."/>
            <person name="Itaya M."/>
            <person name="Jones L.-M."/>
            <person name="Joris B."/>
            <person name="Karamata D."/>
            <person name="Kasahara Y."/>
            <person name="Klaerr-Blanchard M."/>
            <person name="Klein C."/>
            <person name="Kobayashi Y."/>
            <person name="Koetter P."/>
            <person name="Koningstein G."/>
            <person name="Krogh S."/>
            <person name="Kumano M."/>
            <person name="Kurita K."/>
            <person name="Lapidus A."/>
            <person name="Lardinois S."/>
            <person name="Lauber J."/>
            <person name="Lazarevic V."/>
            <person name="Lee S.-M."/>
            <person name="Levine A."/>
            <person name="Liu H."/>
            <person name="Masuda S."/>
            <person name="Mauel C."/>
            <person name="Medigue C."/>
            <person name="Medina N."/>
            <person name="Mellado R.P."/>
            <person name="Mizuno M."/>
            <person name="Moestl D."/>
            <person name="Nakai S."/>
            <person name="Noback M."/>
            <person name="Noone D."/>
            <person name="O'Reilly M."/>
            <person name="Ogawa K."/>
            <person name="Ogiwara A."/>
            <person name="Oudega B."/>
            <person name="Park S.-H."/>
            <person name="Parro V."/>
            <person name="Pohl T.M."/>
            <person name="Portetelle D."/>
            <person name="Porwollik S."/>
            <person name="Prescott A.M."/>
            <person name="Presecan E."/>
            <person name="Pujic P."/>
            <person name="Purnelle B."/>
            <person name="Rapoport G."/>
            <person name="Rey M."/>
            <person name="Reynolds S."/>
            <person name="Rieger M."/>
            <person name="Rivolta C."/>
            <person name="Rocha E."/>
            <person name="Roche B."/>
            <person name="Rose M."/>
            <person name="Sadaie Y."/>
            <person name="Sato T."/>
            <person name="Scanlan E."/>
            <person name="Schleich S."/>
            <person name="Schroeter R."/>
            <person name="Scoffone F."/>
            <person name="Sekiguchi J."/>
            <person name="Sekowska A."/>
            <person name="Seror S.J."/>
            <person name="Serror P."/>
            <person name="Shin B.-S."/>
            <person name="Soldo B."/>
            <person name="Sorokin A."/>
            <person name="Tacconi E."/>
            <person name="Takagi T."/>
            <person name="Takahashi H."/>
            <person name="Takemaru K."/>
            <person name="Takeuchi M."/>
            <person name="Tamakoshi A."/>
            <person name="Tanaka T."/>
            <person name="Terpstra P."/>
            <person name="Tognoni A."/>
            <person name="Tosato V."/>
            <person name="Uchiyama S."/>
            <person name="Vandenbol M."/>
            <person name="Vannier F."/>
            <person name="Vassarotti A."/>
            <person name="Viari A."/>
            <person name="Wambutt R."/>
            <person name="Wedler E."/>
            <person name="Wedler H."/>
            <person name="Weitzenegger T."/>
            <person name="Winters P."/>
            <person name="Wipat A."/>
            <person name="Yamamoto H."/>
            <person name="Yamane K."/>
            <person name="Yasumoto K."/>
            <person name="Yata K."/>
            <person name="Yoshida K."/>
            <person name="Yoshikawa H.-F."/>
            <person name="Zumstein E."/>
            <person name="Yoshikawa H."/>
            <person name="Danchin A."/>
        </authorList>
    </citation>
    <scope>NUCLEOTIDE SEQUENCE [LARGE SCALE GENOMIC DNA]</scope>
    <source>
        <strain>168</strain>
    </source>
</reference>
<reference key="3">
    <citation type="journal article" date="2001" name="Biochemistry">
        <title>Evolution of enzymatic activities in the enolase superfamily: functional assignment of unknown proteins in Bacillus subtilis and Escherichia coli as L-Ala-D/L-Glu epimerases.</title>
        <authorList>
            <person name="Schmidt D.M.Z."/>
            <person name="Hubbard B.K."/>
            <person name="Gerlt J.A."/>
        </authorList>
    </citation>
    <scope>FUNCTION</scope>
    <scope>CATALYTIC ACTIVITY</scope>
    <scope>SUBSTRATE SPECIFICITY</scope>
    <scope>BIOPHYSICOCHEMICAL PROPERTIES</scope>
    <scope>PROBABLE ROLE IN MUREIN PEPTIDE METABOLISM</scope>
    <source>
        <strain>168</strain>
    </source>
</reference>
<reference key="4">
    <citation type="journal article" date="2004" name="Mol. Microbiol.">
        <title>Identification of AbrB-regulated genes involved in biofilm formation by Bacillus subtilis.</title>
        <authorList>
            <person name="Hamon M.A."/>
            <person name="Stanley N.R."/>
            <person name="Britton R.A."/>
            <person name="Grossman A.D."/>
            <person name="Lazazzera B.A."/>
        </authorList>
    </citation>
    <scope>INDUCTION</scope>
</reference>
<reference key="5">
    <citation type="journal article" date="2008" name="Microbiol. Mol. Biol. Rev.">
        <title>How bacteria consume their own exoskeletons (turnover and recycling of cell wall peptidoglycan).</title>
        <authorList>
            <person name="Park J.T."/>
            <person name="Uehara T."/>
        </authorList>
    </citation>
    <scope>PROBABLE FUNCTION IN PEPTIDOGLYCAN DEGRADATION</scope>
    <scope>REVIEW</scope>
</reference>
<reference key="6">
    <citation type="journal article" date="2001" name="Biochemistry">
        <title>Evolution of enzymatic activities in the enolase superfamily: crystal structures of the L-Ala-D/L-Glu epimerases from Escherichia coli and Bacillus subtilis.</title>
        <authorList>
            <person name="Gulick A.M."/>
            <person name="Schmidt D.M.Z."/>
            <person name="Gerlt J.A."/>
            <person name="Rayment I."/>
        </authorList>
    </citation>
    <scope>X-RAY CRYSTALLOGRAPHY (2.25 ANGSTROMS) IN COMPLEX WITH MAGNESIUM</scope>
    <scope>COFACTOR</scope>
    <scope>SUBUNIT</scope>
    <source>
        <strain>168</strain>
    </source>
</reference>
<reference key="7">
    <citation type="journal article" date="2004" name="Biochemistry">
        <title>Evolution of enzymatic activities in the enolase superfamily: structure of a substrate-liganded complex of the L-Ala-D/L-Glu epimerase from Bacillus subtilis.</title>
        <authorList>
            <person name="Klenchin V.A."/>
            <person name="Schmidt D.M.Z."/>
            <person name="Gerlt J.A."/>
            <person name="Rayment I."/>
        </authorList>
    </citation>
    <scope>X-RAY CRYSTALLOGRAPHY (2.1 ANGSTROMS) IN COMPLEX WITH SUBSTRATE AND MAGNESIUM</scope>
    <scope>COFACTOR</scope>
    <scope>ACTIVE SITES</scope>
    <scope>REACTION MECHANISM</scope>
    <source>
        <strain>168</strain>
    </source>
</reference>
<proteinExistence type="evidence at protein level"/>
<organism>
    <name type="scientific">Bacillus subtilis (strain 168)</name>
    <dbReference type="NCBI Taxonomy" id="224308"/>
    <lineage>
        <taxon>Bacteria</taxon>
        <taxon>Bacillati</taxon>
        <taxon>Bacillota</taxon>
        <taxon>Bacilli</taxon>
        <taxon>Bacillales</taxon>
        <taxon>Bacillaceae</taxon>
        <taxon>Bacillus</taxon>
    </lineage>
</organism>
<keyword id="KW-0002">3D-structure</keyword>
<keyword id="KW-0961">Cell wall biogenesis/degradation</keyword>
<keyword id="KW-0413">Isomerase</keyword>
<keyword id="KW-0460">Magnesium</keyword>
<keyword id="KW-0479">Metal-binding</keyword>
<keyword id="KW-1185">Reference proteome</keyword>